<protein>
    <recommendedName>
        <fullName evidence="1">UDP-N-acetylenolpyruvoylglucosamine reductase</fullName>
        <ecNumber evidence="1">1.3.1.98</ecNumber>
    </recommendedName>
    <alternativeName>
        <fullName evidence="1">UDP-N-acetylmuramate dehydrogenase</fullName>
    </alternativeName>
</protein>
<proteinExistence type="inferred from homology"/>
<feature type="chain" id="PRO_0000332499" description="UDP-N-acetylenolpyruvoylglucosamine reductase">
    <location>
        <begin position="1"/>
        <end position="366"/>
    </location>
</feature>
<feature type="domain" description="FAD-binding PCMH-type" evidence="1">
    <location>
        <begin position="27"/>
        <end position="197"/>
    </location>
</feature>
<feature type="active site" evidence="1">
    <location>
        <position position="175"/>
    </location>
</feature>
<feature type="active site" description="Proton donor" evidence="1">
    <location>
        <position position="252"/>
    </location>
</feature>
<feature type="active site" evidence="1">
    <location>
        <position position="358"/>
    </location>
</feature>
<gene>
    <name evidence="1" type="primary">murB</name>
    <name type="ordered locus">SACE_6978</name>
</gene>
<evidence type="ECO:0000255" key="1">
    <source>
        <dbReference type="HAMAP-Rule" id="MF_00037"/>
    </source>
</evidence>
<reference key="1">
    <citation type="journal article" date="2007" name="Nat. Biotechnol.">
        <title>Complete genome sequence of the erythromycin-producing bacterium Saccharopolyspora erythraea NRRL23338.</title>
        <authorList>
            <person name="Oliynyk M."/>
            <person name="Samborskyy M."/>
            <person name="Lester J.B."/>
            <person name="Mironenko T."/>
            <person name="Scott N."/>
            <person name="Dickens S."/>
            <person name="Haydock S.F."/>
            <person name="Leadlay P.F."/>
        </authorList>
    </citation>
    <scope>NUCLEOTIDE SEQUENCE [LARGE SCALE GENOMIC DNA]</scope>
    <source>
        <strain>ATCC 11635 / DSM 40517 / JCM 4748 / NBRC 13426 / NCIMB 8594 / NRRL 2338</strain>
    </source>
</reference>
<name>MURB_SACEN</name>
<sequence>MSGAEGTRDGASPTGGSALAAYTTLRLGGPAAGFVVAEDAETLADAVREADAAGSRLLVLGGGSNLVVADEGFDGHVVRIATRGLRFDSVGDGLVQLTAEAGEDWDAVVAETVRQGLGGLECLSGIPGLTGATPVQNVGAYGVEVSELLLSVDLLDRRTGNVRTVRAEDLGLVYRGSVLKHSDQAVVLRVRFLLRDGGRSAPVRYAELARTLDAEPGSRVDVAEAREAVLALRRGKGMVLDPADHDTWSAGSFFTNPIVEAADLSAVLSRIGAKVGPDQRVPQYPASDGRTKLSAAWLIERAGFGKGHPGPGGRARLSTKHTLALTNRGEATTADLLSLAREVRDGVLAQFGVSLAPEPVLVDCAL</sequence>
<comment type="function">
    <text evidence="1">Cell wall formation.</text>
</comment>
<comment type="catalytic activity">
    <reaction evidence="1">
        <text>UDP-N-acetyl-alpha-D-muramate + NADP(+) = UDP-N-acetyl-3-O-(1-carboxyvinyl)-alpha-D-glucosamine + NADPH + H(+)</text>
        <dbReference type="Rhea" id="RHEA:12248"/>
        <dbReference type="ChEBI" id="CHEBI:15378"/>
        <dbReference type="ChEBI" id="CHEBI:57783"/>
        <dbReference type="ChEBI" id="CHEBI:58349"/>
        <dbReference type="ChEBI" id="CHEBI:68483"/>
        <dbReference type="ChEBI" id="CHEBI:70757"/>
        <dbReference type="EC" id="1.3.1.98"/>
    </reaction>
</comment>
<comment type="cofactor">
    <cofactor evidence="1">
        <name>FAD</name>
        <dbReference type="ChEBI" id="CHEBI:57692"/>
    </cofactor>
</comment>
<comment type="pathway">
    <text evidence="1">Cell wall biogenesis; peptidoglycan biosynthesis.</text>
</comment>
<comment type="subcellular location">
    <subcellularLocation>
        <location evidence="1">Cytoplasm</location>
    </subcellularLocation>
</comment>
<comment type="similarity">
    <text evidence="1">Belongs to the MurB family.</text>
</comment>
<accession>A4FQ15</accession>
<organism>
    <name type="scientific">Saccharopolyspora erythraea (strain ATCC 11635 / DSM 40517 / JCM 4748 / NBRC 13426 / NCIMB 8594 / NRRL 2338)</name>
    <dbReference type="NCBI Taxonomy" id="405948"/>
    <lineage>
        <taxon>Bacteria</taxon>
        <taxon>Bacillati</taxon>
        <taxon>Actinomycetota</taxon>
        <taxon>Actinomycetes</taxon>
        <taxon>Pseudonocardiales</taxon>
        <taxon>Pseudonocardiaceae</taxon>
        <taxon>Saccharopolyspora</taxon>
    </lineage>
</organism>
<dbReference type="EC" id="1.3.1.98" evidence="1"/>
<dbReference type="EMBL" id="AM420293">
    <property type="protein sequence ID" value="CAM06140.1"/>
    <property type="molecule type" value="Genomic_DNA"/>
</dbReference>
<dbReference type="RefSeq" id="WP_011875219.1">
    <property type="nucleotide sequence ID" value="NC_009142.1"/>
</dbReference>
<dbReference type="SMR" id="A4FQ15"/>
<dbReference type="STRING" id="405948.SACE_6978"/>
<dbReference type="KEGG" id="sen:SACE_6978"/>
<dbReference type="eggNOG" id="COG0812">
    <property type="taxonomic scope" value="Bacteria"/>
</dbReference>
<dbReference type="HOGENOM" id="CLU_035304_0_1_11"/>
<dbReference type="OrthoDB" id="9804753at2"/>
<dbReference type="UniPathway" id="UPA00219"/>
<dbReference type="Proteomes" id="UP000006728">
    <property type="component" value="Chromosome"/>
</dbReference>
<dbReference type="GO" id="GO:0005829">
    <property type="term" value="C:cytosol"/>
    <property type="evidence" value="ECO:0007669"/>
    <property type="project" value="TreeGrafter"/>
</dbReference>
<dbReference type="GO" id="GO:0071949">
    <property type="term" value="F:FAD binding"/>
    <property type="evidence" value="ECO:0007669"/>
    <property type="project" value="InterPro"/>
</dbReference>
<dbReference type="GO" id="GO:0008762">
    <property type="term" value="F:UDP-N-acetylmuramate dehydrogenase activity"/>
    <property type="evidence" value="ECO:0007669"/>
    <property type="project" value="UniProtKB-UniRule"/>
</dbReference>
<dbReference type="GO" id="GO:0051301">
    <property type="term" value="P:cell division"/>
    <property type="evidence" value="ECO:0007669"/>
    <property type="project" value="UniProtKB-KW"/>
</dbReference>
<dbReference type="GO" id="GO:0071555">
    <property type="term" value="P:cell wall organization"/>
    <property type="evidence" value="ECO:0007669"/>
    <property type="project" value="UniProtKB-KW"/>
</dbReference>
<dbReference type="GO" id="GO:0009252">
    <property type="term" value="P:peptidoglycan biosynthetic process"/>
    <property type="evidence" value="ECO:0007669"/>
    <property type="project" value="UniProtKB-UniRule"/>
</dbReference>
<dbReference type="GO" id="GO:0008360">
    <property type="term" value="P:regulation of cell shape"/>
    <property type="evidence" value="ECO:0007669"/>
    <property type="project" value="UniProtKB-KW"/>
</dbReference>
<dbReference type="Gene3D" id="3.30.465.10">
    <property type="match status" value="1"/>
</dbReference>
<dbReference type="Gene3D" id="3.90.78.10">
    <property type="entry name" value="UDP-N-acetylenolpyruvoylglucosamine reductase, C-terminal domain"/>
    <property type="match status" value="1"/>
</dbReference>
<dbReference type="Gene3D" id="3.30.43.10">
    <property type="entry name" value="Uridine Diphospho-n-acetylenolpyruvylglucosamine Reductase, domain 2"/>
    <property type="match status" value="1"/>
</dbReference>
<dbReference type="HAMAP" id="MF_00037">
    <property type="entry name" value="MurB"/>
    <property type="match status" value="1"/>
</dbReference>
<dbReference type="InterPro" id="IPR016166">
    <property type="entry name" value="FAD-bd_PCMH"/>
</dbReference>
<dbReference type="InterPro" id="IPR036318">
    <property type="entry name" value="FAD-bd_PCMH-like_sf"/>
</dbReference>
<dbReference type="InterPro" id="IPR016167">
    <property type="entry name" value="FAD-bd_PCMH_sub1"/>
</dbReference>
<dbReference type="InterPro" id="IPR016169">
    <property type="entry name" value="FAD-bd_PCMH_sub2"/>
</dbReference>
<dbReference type="InterPro" id="IPR003170">
    <property type="entry name" value="MurB"/>
</dbReference>
<dbReference type="InterPro" id="IPR011601">
    <property type="entry name" value="MurB_C"/>
</dbReference>
<dbReference type="InterPro" id="IPR036635">
    <property type="entry name" value="MurB_C_sf"/>
</dbReference>
<dbReference type="InterPro" id="IPR006094">
    <property type="entry name" value="Oxid_FAD_bind_N"/>
</dbReference>
<dbReference type="NCBIfam" id="TIGR00179">
    <property type="entry name" value="murB"/>
    <property type="match status" value="1"/>
</dbReference>
<dbReference type="NCBIfam" id="NF010478">
    <property type="entry name" value="PRK13903.1"/>
    <property type="match status" value="1"/>
</dbReference>
<dbReference type="PANTHER" id="PTHR21071">
    <property type="entry name" value="UDP-N-ACETYLENOLPYRUVOYLGLUCOSAMINE REDUCTASE"/>
    <property type="match status" value="1"/>
</dbReference>
<dbReference type="PANTHER" id="PTHR21071:SF4">
    <property type="entry name" value="UDP-N-ACETYLENOLPYRUVOYLGLUCOSAMINE REDUCTASE"/>
    <property type="match status" value="1"/>
</dbReference>
<dbReference type="Pfam" id="PF01565">
    <property type="entry name" value="FAD_binding_4"/>
    <property type="match status" value="1"/>
</dbReference>
<dbReference type="Pfam" id="PF02873">
    <property type="entry name" value="MurB_C"/>
    <property type="match status" value="1"/>
</dbReference>
<dbReference type="SUPFAM" id="SSF56176">
    <property type="entry name" value="FAD-binding/transporter-associated domain-like"/>
    <property type="match status" value="1"/>
</dbReference>
<dbReference type="SUPFAM" id="SSF56194">
    <property type="entry name" value="Uridine diphospho-N-Acetylenolpyruvylglucosamine reductase, MurB, C-terminal domain"/>
    <property type="match status" value="1"/>
</dbReference>
<dbReference type="PROSITE" id="PS51387">
    <property type="entry name" value="FAD_PCMH"/>
    <property type="match status" value="1"/>
</dbReference>
<keyword id="KW-0131">Cell cycle</keyword>
<keyword id="KW-0132">Cell division</keyword>
<keyword id="KW-0133">Cell shape</keyword>
<keyword id="KW-0961">Cell wall biogenesis/degradation</keyword>
<keyword id="KW-0963">Cytoplasm</keyword>
<keyword id="KW-0274">FAD</keyword>
<keyword id="KW-0285">Flavoprotein</keyword>
<keyword id="KW-0521">NADP</keyword>
<keyword id="KW-0560">Oxidoreductase</keyword>
<keyword id="KW-0573">Peptidoglycan synthesis</keyword>
<keyword id="KW-1185">Reference proteome</keyword>